<keyword id="KW-0007">Acetylation</keyword>
<keyword id="KW-0067">ATP-binding</keyword>
<keyword id="KW-0963">Cytoplasm</keyword>
<keyword id="KW-0206">Cytoskeleton</keyword>
<keyword id="KW-0378">Hydrolase</keyword>
<keyword id="KW-0547">Nucleotide-binding</keyword>
<keyword id="KW-1185">Reference proteome</keyword>
<protein>
    <recommendedName>
        <fullName>Actin, cytoplasmic</fullName>
        <ecNumber evidence="2">3.6.4.-</ecNumber>
    </recommendedName>
    <alternativeName>
        <fullName>BfCA1</fullName>
    </alternativeName>
    <component>
        <recommendedName>
            <fullName>Actin, cytoplasmic, N-terminally processed</fullName>
        </recommendedName>
    </component>
</protein>
<name>ACTC_BRAFL</name>
<comment type="function">
    <text>Actins are highly conserved proteins that are involved in various types of cell motility and are ubiquitously expressed in all eukaryotic cells.</text>
</comment>
<comment type="catalytic activity">
    <reaction evidence="2">
        <text>ATP + H2O = ADP + phosphate + H(+)</text>
        <dbReference type="Rhea" id="RHEA:13065"/>
        <dbReference type="ChEBI" id="CHEBI:15377"/>
        <dbReference type="ChEBI" id="CHEBI:15378"/>
        <dbReference type="ChEBI" id="CHEBI:30616"/>
        <dbReference type="ChEBI" id="CHEBI:43474"/>
        <dbReference type="ChEBI" id="CHEBI:456216"/>
    </reaction>
</comment>
<comment type="subcellular location">
    <subcellularLocation>
        <location>Cytoplasm</location>
        <location>Cytoskeleton</location>
    </subcellularLocation>
</comment>
<comment type="similarity">
    <text evidence="3">Belongs to the actin family.</text>
</comment>
<dbReference type="EC" id="3.6.4.-" evidence="2"/>
<dbReference type="EMBL" id="D87406">
    <property type="protein sequence ID" value="BAA13350.1"/>
    <property type="molecule type" value="mRNA"/>
</dbReference>
<dbReference type="RefSeq" id="XP_002606072.1">
    <property type="nucleotide sequence ID" value="XM_002606026.1"/>
</dbReference>
<dbReference type="RefSeq" id="XP_035694947.1">
    <property type="nucleotide sequence ID" value="XM_035839054.1"/>
</dbReference>
<dbReference type="SMR" id="Q93131"/>
<dbReference type="GeneID" id="118428830"/>
<dbReference type="eggNOG" id="KOG0676">
    <property type="taxonomic scope" value="Eukaryota"/>
</dbReference>
<dbReference type="OMA" id="TANASRW"/>
<dbReference type="OrthoDB" id="6953074at2759"/>
<dbReference type="Proteomes" id="UP000001554">
    <property type="component" value="Chromosome 13"/>
</dbReference>
<dbReference type="GO" id="GO:0005737">
    <property type="term" value="C:cytoplasm"/>
    <property type="evidence" value="ECO:0007669"/>
    <property type="project" value="UniProtKB-KW"/>
</dbReference>
<dbReference type="GO" id="GO:0005856">
    <property type="term" value="C:cytoskeleton"/>
    <property type="evidence" value="ECO:0007669"/>
    <property type="project" value="UniProtKB-SubCell"/>
</dbReference>
<dbReference type="GO" id="GO:0005524">
    <property type="term" value="F:ATP binding"/>
    <property type="evidence" value="ECO:0007669"/>
    <property type="project" value="UniProtKB-KW"/>
</dbReference>
<dbReference type="GO" id="GO:0016787">
    <property type="term" value="F:hydrolase activity"/>
    <property type="evidence" value="ECO:0007669"/>
    <property type="project" value="UniProtKB-KW"/>
</dbReference>
<dbReference type="CDD" id="cd10224">
    <property type="entry name" value="ASKHA_NBD_actin"/>
    <property type="match status" value="1"/>
</dbReference>
<dbReference type="FunFam" id="2.30.36.70:FF:000001">
    <property type="entry name" value="Actin, alpha skeletal muscle"/>
    <property type="match status" value="1"/>
</dbReference>
<dbReference type="FunFam" id="3.30.420.40:FF:000131">
    <property type="entry name" value="Actin, alpha skeletal muscle"/>
    <property type="match status" value="1"/>
</dbReference>
<dbReference type="FunFam" id="3.30.420.40:FF:000291">
    <property type="entry name" value="Actin, alpha skeletal muscle"/>
    <property type="match status" value="1"/>
</dbReference>
<dbReference type="FunFam" id="3.90.640.10:FF:000047">
    <property type="entry name" value="Actin, alpha skeletal muscle"/>
    <property type="match status" value="1"/>
</dbReference>
<dbReference type="FunFam" id="3.30.420.40:FF:000058">
    <property type="entry name" value="Putative actin-related protein 5"/>
    <property type="match status" value="1"/>
</dbReference>
<dbReference type="Gene3D" id="3.30.420.40">
    <property type="match status" value="2"/>
</dbReference>
<dbReference type="Gene3D" id="3.90.640.10">
    <property type="entry name" value="Actin, Chain A, domain 4"/>
    <property type="match status" value="1"/>
</dbReference>
<dbReference type="InterPro" id="IPR004000">
    <property type="entry name" value="Actin"/>
</dbReference>
<dbReference type="InterPro" id="IPR020902">
    <property type="entry name" value="Actin/actin-like_CS"/>
</dbReference>
<dbReference type="InterPro" id="IPR004001">
    <property type="entry name" value="Actin_CS"/>
</dbReference>
<dbReference type="InterPro" id="IPR043129">
    <property type="entry name" value="ATPase_NBD"/>
</dbReference>
<dbReference type="PANTHER" id="PTHR11937">
    <property type="entry name" value="ACTIN"/>
    <property type="match status" value="1"/>
</dbReference>
<dbReference type="Pfam" id="PF00022">
    <property type="entry name" value="Actin"/>
    <property type="match status" value="1"/>
</dbReference>
<dbReference type="PRINTS" id="PR00190">
    <property type="entry name" value="ACTIN"/>
</dbReference>
<dbReference type="SMART" id="SM00268">
    <property type="entry name" value="ACTIN"/>
    <property type="match status" value="1"/>
</dbReference>
<dbReference type="SUPFAM" id="SSF53067">
    <property type="entry name" value="Actin-like ATPase domain"/>
    <property type="match status" value="2"/>
</dbReference>
<dbReference type="PROSITE" id="PS00406">
    <property type="entry name" value="ACTINS_1"/>
    <property type="match status" value="1"/>
</dbReference>
<dbReference type="PROSITE" id="PS00432">
    <property type="entry name" value="ACTINS_2"/>
    <property type="match status" value="1"/>
</dbReference>
<dbReference type="PROSITE" id="PS01132">
    <property type="entry name" value="ACTINS_ACT_LIKE"/>
    <property type="match status" value="1"/>
</dbReference>
<accession>Q93131</accession>
<organism>
    <name type="scientific">Branchiostoma floridae</name>
    <name type="common">Florida lancelet</name>
    <name type="synonym">Amphioxus</name>
    <dbReference type="NCBI Taxonomy" id="7739"/>
    <lineage>
        <taxon>Eukaryota</taxon>
        <taxon>Metazoa</taxon>
        <taxon>Chordata</taxon>
        <taxon>Cephalochordata</taxon>
        <taxon>Leptocardii</taxon>
        <taxon>Amphioxiformes</taxon>
        <taxon>Branchiostomatidae</taxon>
        <taxon>Branchiostoma</taxon>
    </lineage>
</organism>
<feature type="chain" id="PRO_0000367111" description="Actin, cytoplasmic">
    <location>
        <begin position="1"/>
        <end position="375"/>
    </location>
</feature>
<feature type="initiator methionine" description="Removed; alternate" evidence="1">
    <location>
        <position position="1"/>
    </location>
</feature>
<feature type="chain" id="PRO_0000000645" description="Actin, cytoplasmic, N-terminally processed">
    <location>
        <begin position="2"/>
        <end position="375"/>
    </location>
</feature>
<feature type="modified residue" description="N-acetylmethionine; in Actin, cytoplasmic; alternate" evidence="1">
    <location>
        <position position="1"/>
    </location>
</feature>
<feature type="modified residue" description="N-acetylglutamate; in Actin, cytoplasmic, N-terminally processed" evidence="1">
    <location>
        <position position="2"/>
    </location>
</feature>
<reference key="1">
    <citation type="journal article" date="1999" name="Gene">
        <title>Genomic organization and evolution of actin genes in the amphioxus Branchiostoma belcheri and Branchiostoma floridae.</title>
        <authorList>
            <person name="Kusakabe R."/>
            <person name="Satoh N."/>
            <person name="Holland L.Z."/>
            <person name="Kusakabe T."/>
        </authorList>
    </citation>
    <scope>NUCLEOTIDE SEQUENCE [MRNA]</scope>
    <source>
        <tissue>Larva</tissue>
    </source>
</reference>
<sequence>MEDDVAALVVDNGSGMCKAGFAGDDAPRAVFPSIVGRPRHQGVMVGMGQKDSYVGDEAQSKRGILTLKYPIEHGIVTNWDDMEKIWHHTFYNELRVAPEEHPVLLTEAPLNPKANREKMTQIMFETFNSPAMYVAIQAVLSLYASGRTTGIVLDSGDGVSHTVPIYEGYALPHAILRLDLAGRDLTDYLMKILTERGYSFTTTAEREIVRDIKEKLCYVALDFEQEMSTAASSSSLEKSYELPDGQVITIGNERFRCPESLFQPSFLGMESTGVHETTYNSIMKCDIDIRKDLYANTVLSGGTTMFPGIADRMQKEITALAPSTMKIKIIAPPERKYSVWIGGSILASLSTFQQMWISKQEYDESGPSIVHRKCF</sequence>
<evidence type="ECO:0000250" key="1"/>
<evidence type="ECO:0000250" key="2">
    <source>
        <dbReference type="UniProtKB" id="P68137"/>
    </source>
</evidence>
<evidence type="ECO:0000305" key="3"/>
<proteinExistence type="evidence at transcript level"/>